<keyword id="KW-0002">3D-structure</keyword>
<keyword id="KW-0025">Alternative splicing</keyword>
<keyword id="KW-0966">Cell projection</keyword>
<keyword id="KW-0175">Coiled coil</keyword>
<keyword id="KW-0217">Developmental protein</keyword>
<keyword id="KW-1015">Disulfide bond</keyword>
<keyword id="KW-0256">Endoplasmic reticulum</keyword>
<keyword id="KW-0325">Glycoprotein</keyword>
<keyword id="KW-1267">Proteomics identification</keyword>
<keyword id="KW-1185">Reference proteome</keyword>
<keyword id="KW-0964">Secreted</keyword>
<keyword id="KW-0732">Signal</keyword>
<keyword id="KW-0770">Synapse</keyword>
<comment type="function">
    <text evidence="1 2">Contributes to the regulation of axonal growth in the embryonic and adult central nervous system by inhibiting interactions between RTN4R and LINGO1. Inhibits RTN4R-mediated axon growth cone collapse (By similarity). May play an important role in regulating the production of neural crest cells by the neural tube (By similarity). May be required for normal responses to olfactory stimuli (By similarity).</text>
</comment>
<comment type="subunit">
    <text evidence="1 6">Homotetramer; disulfide-linked. Dimer of dimers, giving rise to a V-shaped homotretramer. Isoform 1 and isoform 3 interact with RTN4R. Identified in a complex with RTN4R and LINGO1. Peripherally associated with AMPAR complex. AMPAR complex consists of an inner core made of 4 pore-forming GluA/GRIA proteins (GRIA1, GRIA2, GRIA3 and GRIA4) and 4 major auxiliary subunits arranged in a twofold symmetry. One of the two pairs of distinct binding sites is occupied either by CNIH2, CNIH3 or CACNG2, CACNG3. The other harbors CACNG2, CACNG3, CACNG4, CACNG8 or GSG1L. This inner core of AMPAR complex is complemented by outer core constituents binding directly to the GluA/GRIA proteins at sites distinct from the interaction sites of the inner core constituents. Outer core constituents include at least PRRT1, PRRT2, CKAMP44/SHISA9, FRRS1L and NRN1. The proteins of the inner and outer core serve as a platform for other, more peripherally associated AMPAR constituents, including OLFM1. Alone or in combination, these auxiliary subunits control the gating and pharmacology of the AMPAR complex and profoundly impact their biogenesis and protein processing (By similarity). Interacts with OLFM2 (PubMed:21228389).</text>
</comment>
<comment type="interaction">
    <interactant intactId="EBI-1105073">
        <id>Q99784</id>
    </interactant>
    <interactant intactId="EBI-15881455">
        <id>Q9NRI5-1</id>
        <label>DISC1</label>
    </interactant>
    <organismsDiffer>false</organismsDiffer>
    <experiments>3</experiments>
</comment>
<comment type="interaction">
    <interactant intactId="EBI-12304423">
        <id>Q99784-3</id>
    </interactant>
    <interactant intactId="EBI-16439278">
        <id>Q6FHY5</id>
        <label>MEOX2</label>
    </interactant>
    <organismsDiffer>false</organismsDiffer>
    <experiments>3</experiments>
</comment>
<comment type="subcellular location">
    <subcellularLocation>
        <location evidence="1">Secreted</location>
    </subcellularLocation>
    <subcellularLocation>
        <location evidence="1">Synapse</location>
    </subcellularLocation>
    <subcellularLocation>
        <location evidence="1">Endoplasmic reticulum</location>
    </subcellularLocation>
    <subcellularLocation>
        <location evidence="1">Cell projection</location>
        <location evidence="1">Axon</location>
    </subcellularLocation>
    <subcellularLocation>
        <location evidence="1">Perikaryon</location>
    </subcellularLocation>
</comment>
<comment type="alternative products">
    <event type="alternative splicing"/>
    <isoform>
        <id>Q99784-1</id>
        <name>1</name>
        <sequence type="displayed"/>
    </isoform>
    <isoform>
        <id>Q99784-2</id>
        <name>2</name>
        <sequence type="described" ref="VSP_003760 VSP_003761"/>
    </isoform>
    <isoform>
        <id>Q99784-3</id>
        <name>3</name>
        <sequence type="described" ref="VSP_003759"/>
    </isoform>
    <isoform>
        <id>Q99784-4</id>
        <name>4</name>
        <name>AMY</name>
        <sequence type="described" ref="VSP_003759 VSP_003760 VSP_003761"/>
    </isoform>
    <isoform>
        <id>Q99784-5</id>
        <name>5</name>
        <sequence type="described" ref="VSP_055625"/>
    </isoform>
    <text>Experimental confirmation may be lacking for some isoforms.</text>
</comment>
<comment type="domain">
    <text evidence="1">The protein contains a globular N-terminal tetramerization domain, a long stalk formed by the coiled coil region and a C-terminal olfactomedin-like domain. Interactions between dimers are mediated by the coiled coil region. The dimers interact mostly via the N-terminal tetramerization domain, giving rise to a V-shaped overall architecture of the tetramer.</text>
</comment>
<accession>Q99784</accession>
<accession>Q53XZ8</accession>
<accession>Q6IMJ4</accession>
<accession>Q6IMJ5</accession>
<accession>Q8N8R0</accession>
<accession>Q969S7</accession>
<accession>Q99452</accession>
<dbReference type="EMBL" id="D82343">
    <property type="protein sequence ID" value="BAA11554.1"/>
    <property type="molecule type" value="mRNA"/>
</dbReference>
<dbReference type="EMBL" id="AK096304">
    <property type="protein sequence ID" value="BAC04756.1"/>
    <property type="molecule type" value="mRNA"/>
</dbReference>
<dbReference type="EMBL" id="AK290478">
    <property type="protein sequence ID" value="BAF83167.1"/>
    <property type="molecule type" value="mRNA"/>
</dbReference>
<dbReference type="EMBL" id="AL159992">
    <property type="status" value="NOT_ANNOTATED_CDS"/>
    <property type="molecule type" value="Genomic_DNA"/>
</dbReference>
<dbReference type="EMBL" id="AL390778">
    <property type="status" value="NOT_ANNOTATED_CDS"/>
    <property type="molecule type" value="Genomic_DNA"/>
</dbReference>
<dbReference type="EMBL" id="BC008763">
    <property type="protein sequence ID" value="AAH08763.2"/>
    <property type="molecule type" value="mRNA"/>
</dbReference>
<dbReference type="EMBL" id="BC011741">
    <property type="protein sequence ID" value="AAH11741.2"/>
    <property type="molecule type" value="mRNA"/>
</dbReference>
<dbReference type="EMBL" id="BT007146">
    <property type="protein sequence ID" value="AAP35810.1"/>
    <property type="molecule type" value="mRNA"/>
</dbReference>
<dbReference type="EMBL" id="U79299">
    <property type="protein sequence ID" value="AAB50225.1"/>
    <property type="molecule type" value="mRNA"/>
</dbReference>
<dbReference type="EMBL" id="AF035301">
    <property type="protein sequence ID" value="AAB88184.1"/>
    <property type="molecule type" value="mRNA"/>
</dbReference>
<dbReference type="EMBL" id="BK001427">
    <property type="protein sequence ID" value="DAA01546.1"/>
    <property type="molecule type" value="Genomic_DNA"/>
</dbReference>
<dbReference type="EMBL" id="BK001427">
    <property type="protein sequence ID" value="DAA01547.1"/>
    <property type="molecule type" value="Genomic_DNA"/>
</dbReference>
<dbReference type="CCDS" id="CCDS65183.1">
    <molecule id="Q99784-5"/>
</dbReference>
<dbReference type="CCDS" id="CCDS65184.1">
    <molecule id="Q99784-1"/>
</dbReference>
<dbReference type="PIR" id="JC5272">
    <property type="entry name" value="JC5272"/>
</dbReference>
<dbReference type="RefSeq" id="NP_001269540.1">
    <molecule id="Q99784-1"/>
    <property type="nucleotide sequence ID" value="NM_001282611.2"/>
</dbReference>
<dbReference type="RefSeq" id="NP_001269541.1">
    <molecule id="Q99784-5"/>
    <property type="nucleotide sequence ID" value="NM_001282612.1"/>
</dbReference>
<dbReference type="RefSeq" id="NP_006325.1">
    <property type="nucleotide sequence ID" value="NM_006334.3"/>
</dbReference>
<dbReference type="RefSeq" id="NP_055094.1">
    <property type="nucleotide sequence ID" value="NM_014279.4"/>
</dbReference>
<dbReference type="PDB" id="4XAT">
    <property type="method" value="X-ray"/>
    <property type="resolution" value="2.11 A"/>
    <property type="chains" value="A=218-485"/>
</dbReference>
<dbReference type="PDB" id="6QHJ">
    <property type="method" value="X-ray"/>
    <property type="resolution" value="1.25 A"/>
    <property type="chains" value="A=226-478"/>
</dbReference>
<dbReference type="PDBsum" id="4XAT"/>
<dbReference type="PDBsum" id="6QHJ"/>
<dbReference type="SMR" id="Q99784"/>
<dbReference type="BioGRID" id="115706">
    <property type="interactions" value="20"/>
</dbReference>
<dbReference type="FunCoup" id="Q99784">
    <property type="interactions" value="248"/>
</dbReference>
<dbReference type="IntAct" id="Q99784">
    <property type="interactions" value="16"/>
</dbReference>
<dbReference type="STRING" id="9606.ENSP00000360858"/>
<dbReference type="GlyConnect" id="1962">
    <property type="glycosylation" value="8 N-Linked glycans (3 sites)"/>
</dbReference>
<dbReference type="GlyCosmos" id="Q99784">
    <property type="glycosylation" value="8 sites, 9 glycans"/>
</dbReference>
<dbReference type="GlyGen" id="Q99784">
    <property type="glycosylation" value="8 sites, 13 N-linked glycans (4 sites)"/>
</dbReference>
<dbReference type="iPTMnet" id="Q99784"/>
<dbReference type="PhosphoSitePlus" id="Q99784"/>
<dbReference type="BioMuta" id="OLFM1"/>
<dbReference type="DMDM" id="206729935"/>
<dbReference type="jPOST" id="Q99784"/>
<dbReference type="MassIVE" id="Q99784"/>
<dbReference type="PaxDb" id="9606-ENSP00000360858"/>
<dbReference type="PeptideAtlas" id="Q99784"/>
<dbReference type="ProteomicsDB" id="66431"/>
<dbReference type="ProteomicsDB" id="78470">
    <molecule id="Q99784-1"/>
</dbReference>
<dbReference type="ProteomicsDB" id="78471">
    <molecule id="Q99784-2"/>
</dbReference>
<dbReference type="ProteomicsDB" id="78472">
    <molecule id="Q99784-3"/>
</dbReference>
<dbReference type="ProteomicsDB" id="78473">
    <molecule id="Q99784-4"/>
</dbReference>
<dbReference type="ABCD" id="Q99784">
    <property type="antibodies" value="1 sequenced antibody"/>
</dbReference>
<dbReference type="Antibodypedia" id="32030">
    <property type="antibodies" value="402 antibodies from 38 providers"/>
</dbReference>
<dbReference type="DNASU" id="10439"/>
<dbReference type="Ensembl" id="ENST00000252854.8">
    <molecule id="Q99784-3"/>
    <property type="protein sequence ID" value="ENSP00000252854.4"/>
    <property type="gene ID" value="ENSG00000130558.20"/>
</dbReference>
<dbReference type="Ensembl" id="ENST00000277415.15">
    <molecule id="Q99784-4"/>
    <property type="protein sequence ID" value="ENSP00000277415.11"/>
    <property type="gene ID" value="ENSG00000130558.20"/>
</dbReference>
<dbReference type="Ensembl" id="ENST00000371793.8">
    <molecule id="Q99784-1"/>
    <property type="protein sequence ID" value="ENSP00000360858.3"/>
    <property type="gene ID" value="ENSG00000130558.20"/>
</dbReference>
<dbReference type="Ensembl" id="ENST00000371796.7">
    <molecule id="Q99784-5"/>
    <property type="protein sequence ID" value="ENSP00000360861.3"/>
    <property type="gene ID" value="ENSG00000130558.20"/>
</dbReference>
<dbReference type="Ensembl" id="ENST00000392991.8">
    <molecule id="Q99784-2"/>
    <property type="protein sequence ID" value="ENSP00000376717.4"/>
    <property type="gene ID" value="ENSG00000130558.20"/>
</dbReference>
<dbReference type="GeneID" id="10439"/>
<dbReference type="KEGG" id="hsa:10439"/>
<dbReference type="MANE-Select" id="ENST00000371793.8">
    <property type="protein sequence ID" value="ENSP00000360858.3"/>
    <property type="RefSeq nucleotide sequence ID" value="NM_001282611.2"/>
    <property type="RefSeq protein sequence ID" value="NP_001269540.1"/>
</dbReference>
<dbReference type="UCSC" id="uc004cfk.5">
    <molecule id="Q99784-1"/>
    <property type="organism name" value="human"/>
</dbReference>
<dbReference type="AGR" id="HGNC:17187"/>
<dbReference type="CTD" id="10439"/>
<dbReference type="DisGeNET" id="10439"/>
<dbReference type="GeneCards" id="OLFM1"/>
<dbReference type="HGNC" id="HGNC:17187">
    <property type="gene designation" value="OLFM1"/>
</dbReference>
<dbReference type="HPA" id="ENSG00000130558">
    <property type="expression patterns" value="Tissue enriched (brain)"/>
</dbReference>
<dbReference type="MIM" id="605366">
    <property type="type" value="gene"/>
</dbReference>
<dbReference type="neXtProt" id="NX_Q99784"/>
<dbReference type="OpenTargets" id="ENSG00000130558"/>
<dbReference type="PharmGKB" id="PA31915"/>
<dbReference type="VEuPathDB" id="HostDB:ENSG00000130558"/>
<dbReference type="eggNOG" id="KOG3545">
    <property type="taxonomic scope" value="Eukaryota"/>
</dbReference>
<dbReference type="GeneTree" id="ENSGT00940000156959"/>
<dbReference type="HOGENOM" id="CLU_1991857_0_0_1"/>
<dbReference type="InParanoid" id="Q99784"/>
<dbReference type="OMA" id="CASAWAC"/>
<dbReference type="OrthoDB" id="8626508at2759"/>
<dbReference type="PAN-GO" id="Q99784">
    <property type="GO annotations" value="2 GO annotations based on evolutionary models"/>
</dbReference>
<dbReference type="PhylomeDB" id="Q99784"/>
<dbReference type="TreeFam" id="TF315964"/>
<dbReference type="PathwayCommons" id="Q99784"/>
<dbReference type="SignaLink" id="Q99784"/>
<dbReference type="BioGRID-ORCS" id="10439">
    <property type="hits" value="10 hits in 1151 CRISPR screens"/>
</dbReference>
<dbReference type="CD-CODE" id="FB4E32DD">
    <property type="entry name" value="Presynaptic clusters and postsynaptic densities"/>
</dbReference>
<dbReference type="ChiTaRS" id="OLFM1">
    <property type="organism name" value="human"/>
</dbReference>
<dbReference type="EvolutionaryTrace" id="Q99784"/>
<dbReference type="GeneWiki" id="OLFM1"/>
<dbReference type="GenomeRNAi" id="10439"/>
<dbReference type="Pharos" id="Q99784">
    <property type="development level" value="Tbio"/>
</dbReference>
<dbReference type="PRO" id="PR:Q99784"/>
<dbReference type="Proteomes" id="UP000005640">
    <property type="component" value="Chromosome 9"/>
</dbReference>
<dbReference type="RNAct" id="Q99784">
    <property type="molecule type" value="protein"/>
</dbReference>
<dbReference type="Bgee" id="ENSG00000130558">
    <property type="expression patterns" value="Expressed in middle temporal gyrus and 185 other cell types or tissues"/>
</dbReference>
<dbReference type="ExpressionAtlas" id="Q99784">
    <property type="expression patterns" value="baseline and differential"/>
</dbReference>
<dbReference type="GO" id="GO:0030424">
    <property type="term" value="C:axon"/>
    <property type="evidence" value="ECO:0000250"/>
    <property type="project" value="UniProtKB"/>
</dbReference>
<dbReference type="GO" id="GO:0044295">
    <property type="term" value="C:axonal growth cone"/>
    <property type="evidence" value="ECO:0000250"/>
    <property type="project" value="UniProtKB"/>
</dbReference>
<dbReference type="GO" id="GO:0005783">
    <property type="term" value="C:endoplasmic reticulum"/>
    <property type="evidence" value="ECO:0000250"/>
    <property type="project" value="UniProtKB"/>
</dbReference>
<dbReference type="GO" id="GO:0005615">
    <property type="term" value="C:extracellular space"/>
    <property type="evidence" value="ECO:0000250"/>
    <property type="project" value="UniProtKB"/>
</dbReference>
<dbReference type="GO" id="GO:0043025">
    <property type="term" value="C:neuronal cell body"/>
    <property type="evidence" value="ECO:0000250"/>
    <property type="project" value="UniProtKB"/>
</dbReference>
<dbReference type="GO" id="GO:0043204">
    <property type="term" value="C:perikaryon"/>
    <property type="evidence" value="ECO:0007669"/>
    <property type="project" value="UniProtKB-SubCell"/>
</dbReference>
<dbReference type="GO" id="GO:0045202">
    <property type="term" value="C:synapse"/>
    <property type="evidence" value="ECO:0007669"/>
    <property type="project" value="UniProtKB-SubCell"/>
</dbReference>
<dbReference type="GO" id="GO:0003190">
    <property type="term" value="P:atrioventricular valve formation"/>
    <property type="evidence" value="ECO:0000250"/>
    <property type="project" value="AgBase"/>
</dbReference>
<dbReference type="GO" id="GO:0060317">
    <property type="term" value="P:cardiac epithelial to mesenchymal transition"/>
    <property type="evidence" value="ECO:0000250"/>
    <property type="project" value="AgBase"/>
</dbReference>
<dbReference type="GO" id="GO:0010629">
    <property type="term" value="P:negative regulation of gene expression"/>
    <property type="evidence" value="ECO:0000250"/>
    <property type="project" value="AgBase"/>
</dbReference>
<dbReference type="GO" id="GO:0007399">
    <property type="term" value="P:nervous system development"/>
    <property type="evidence" value="ECO:0000304"/>
    <property type="project" value="ProtInc"/>
</dbReference>
<dbReference type="GO" id="GO:0023041">
    <property type="term" value="P:neuronal signal transduction"/>
    <property type="evidence" value="ECO:0000250"/>
    <property type="project" value="UniProtKB"/>
</dbReference>
<dbReference type="GO" id="GO:0043065">
    <property type="term" value="P:positive regulation of apoptotic process"/>
    <property type="evidence" value="ECO:0000314"/>
    <property type="project" value="UniProtKB"/>
</dbReference>
<dbReference type="GO" id="GO:0010718">
    <property type="term" value="P:positive regulation of epithelial to mesenchymal transition"/>
    <property type="evidence" value="ECO:0000250"/>
    <property type="project" value="AgBase"/>
</dbReference>
<dbReference type="GO" id="GO:0010628">
    <property type="term" value="P:positive regulation of gene expression"/>
    <property type="evidence" value="ECO:0000250"/>
    <property type="project" value="AgBase"/>
</dbReference>
<dbReference type="GO" id="GO:0030516">
    <property type="term" value="P:regulation of axon extension"/>
    <property type="evidence" value="ECO:0000250"/>
    <property type="project" value="UniProtKB"/>
</dbReference>
<dbReference type="GO" id="GO:0098696">
    <property type="term" value="P:regulation of neurotransmitter receptor localization to postsynaptic specialization membrane"/>
    <property type="evidence" value="ECO:0007669"/>
    <property type="project" value="Ensembl"/>
</dbReference>
<dbReference type="GO" id="GO:0007165">
    <property type="term" value="P:signal transduction"/>
    <property type="evidence" value="ECO:0000318"/>
    <property type="project" value="GO_Central"/>
</dbReference>
<dbReference type="InterPro" id="IPR022082">
    <property type="entry name" value="Noelin_dom"/>
</dbReference>
<dbReference type="InterPro" id="IPR003112">
    <property type="entry name" value="Olfac-like_dom"/>
</dbReference>
<dbReference type="InterPro" id="IPR050605">
    <property type="entry name" value="Olfactomedin-like_domain"/>
</dbReference>
<dbReference type="InterPro" id="IPR011044">
    <property type="entry name" value="Quino_amine_DH_bsu"/>
</dbReference>
<dbReference type="PANTHER" id="PTHR23192:SF34">
    <property type="entry name" value="NOELIN"/>
    <property type="match status" value="1"/>
</dbReference>
<dbReference type="PANTHER" id="PTHR23192">
    <property type="entry name" value="OLFACTOMEDIN-RELATED"/>
    <property type="match status" value="1"/>
</dbReference>
<dbReference type="Pfam" id="PF12308">
    <property type="entry name" value="Noelin-1"/>
    <property type="match status" value="1"/>
</dbReference>
<dbReference type="Pfam" id="PF02191">
    <property type="entry name" value="OLF"/>
    <property type="match status" value="1"/>
</dbReference>
<dbReference type="SMART" id="SM00284">
    <property type="entry name" value="OLF"/>
    <property type="match status" value="1"/>
</dbReference>
<dbReference type="SUPFAM" id="SSF50969">
    <property type="entry name" value="YVTN repeat-like/Quinoprotein amine dehydrogenase"/>
    <property type="match status" value="1"/>
</dbReference>
<dbReference type="PROSITE" id="PS00014">
    <property type="entry name" value="ER_TARGET"/>
    <property type="match status" value="1"/>
</dbReference>
<dbReference type="PROSITE" id="PS51132">
    <property type="entry name" value="OLF"/>
    <property type="match status" value="1"/>
</dbReference>
<protein>
    <recommendedName>
        <fullName>Noelin</fullName>
    </recommendedName>
    <alternativeName>
        <fullName>Neuronal olfactomedin-related ER localized protein</fullName>
    </alternativeName>
    <alternativeName>
        <fullName>Olfactomedin-1</fullName>
    </alternativeName>
</protein>
<sequence>MSVPLLKIGVVLSTMAMITNWMSQTLPSLVGLNTTKLSAAGGGTLDRSTGVLPTNPEESWQVYSSAQDSEGRCICTVVAPQQTMCSRDARTKQLRQLLEKVQNMSQSIEVLDRRTQRDLQYVEKMENQMKGLESKFKQVEESHKQHLARQFKAIKAKMDELRPLIPVLEEYKADAKLVLQFKEEVQNLTSVLNELQEEIGAYDYDELQSRVSNLEERLRACMQKLACGKLTGISDPVTVKTSGSRFGSWMTDPLAPEGDNRVWYMDGYHNNRFVREYKSMVDFMNTDNFTSHRLPHPWSGTGQVVYNGSIYFNKFQSHIIIRFDLKTETILKTRSLDYAGYNNMYHYAWGGHSDIDLMVDESGLWAVYATNQNAGNIVVSRLDPVSLQTLQTWNTSYPKRSAGEAFIICGTLYVTNGYSGGTKVHYAYQTNASTYEYIDIPFQNKYSHISMLDYNPKDRALYAWNNGHQILYNVTLFHVIRSDEL</sequence>
<name>NOE1_HUMAN</name>
<evidence type="ECO:0000250" key="1">
    <source>
        <dbReference type="UniProtKB" id="O88998"/>
    </source>
</evidence>
<evidence type="ECO:0000250" key="2">
    <source>
        <dbReference type="UniProtKB" id="Q9IAK4"/>
    </source>
</evidence>
<evidence type="ECO:0000255" key="3"/>
<evidence type="ECO:0000255" key="4">
    <source>
        <dbReference type="PROSITE-ProRule" id="PRU00446"/>
    </source>
</evidence>
<evidence type="ECO:0000269" key="5">
    <source>
    </source>
</evidence>
<evidence type="ECO:0000269" key="6">
    <source>
    </source>
</evidence>
<evidence type="ECO:0000303" key="7">
    <source>
    </source>
</evidence>
<evidence type="ECO:0000303" key="8">
    <source>
    </source>
</evidence>
<evidence type="ECO:0000303" key="9">
    <source>
    </source>
</evidence>
<evidence type="ECO:0000303" key="10">
    <source ref="5"/>
</evidence>
<evidence type="ECO:0000305" key="11"/>
<evidence type="ECO:0007829" key="12">
    <source>
        <dbReference type="PDB" id="6QHJ"/>
    </source>
</evidence>
<reference key="1">
    <citation type="journal article" date="1996" name="DNA Res.">
        <title>Identification and cloning of neuroblastoma-specific and nerve tissue-specific genes through compiled expression profiles.</title>
        <authorList>
            <person name="Yokoyama M."/>
            <person name="Nishi Y."/>
            <person name="Yoshii J."/>
            <person name="Okubo K."/>
            <person name="Matsubara K."/>
        </authorList>
    </citation>
    <scope>NUCLEOTIDE SEQUENCE [MRNA] (ISOFORM 4)</scope>
</reference>
<reference key="2">
    <citation type="journal article" date="2004" name="Nat. Genet.">
        <title>Complete sequencing and characterization of 21,243 full-length human cDNAs.</title>
        <authorList>
            <person name="Ota T."/>
            <person name="Suzuki Y."/>
            <person name="Nishikawa T."/>
            <person name="Otsuki T."/>
            <person name="Sugiyama T."/>
            <person name="Irie R."/>
            <person name="Wakamatsu A."/>
            <person name="Hayashi K."/>
            <person name="Sato H."/>
            <person name="Nagai K."/>
            <person name="Kimura K."/>
            <person name="Makita H."/>
            <person name="Sekine M."/>
            <person name="Obayashi M."/>
            <person name="Nishi T."/>
            <person name="Shibahara T."/>
            <person name="Tanaka T."/>
            <person name="Ishii S."/>
            <person name="Yamamoto J."/>
            <person name="Saito K."/>
            <person name="Kawai Y."/>
            <person name="Isono Y."/>
            <person name="Nakamura Y."/>
            <person name="Nagahari K."/>
            <person name="Murakami K."/>
            <person name="Yasuda T."/>
            <person name="Iwayanagi T."/>
            <person name="Wagatsuma M."/>
            <person name="Shiratori A."/>
            <person name="Sudo H."/>
            <person name="Hosoiri T."/>
            <person name="Kaku Y."/>
            <person name="Kodaira H."/>
            <person name="Kondo H."/>
            <person name="Sugawara M."/>
            <person name="Takahashi M."/>
            <person name="Kanda K."/>
            <person name="Yokoi T."/>
            <person name="Furuya T."/>
            <person name="Kikkawa E."/>
            <person name="Omura Y."/>
            <person name="Abe K."/>
            <person name="Kamihara K."/>
            <person name="Katsuta N."/>
            <person name="Sato K."/>
            <person name="Tanikawa M."/>
            <person name="Yamazaki M."/>
            <person name="Ninomiya K."/>
            <person name="Ishibashi T."/>
            <person name="Yamashita H."/>
            <person name="Murakawa K."/>
            <person name="Fujimori K."/>
            <person name="Tanai H."/>
            <person name="Kimata M."/>
            <person name="Watanabe M."/>
            <person name="Hiraoka S."/>
            <person name="Chiba Y."/>
            <person name="Ishida S."/>
            <person name="Ono Y."/>
            <person name="Takiguchi S."/>
            <person name="Watanabe S."/>
            <person name="Yosida M."/>
            <person name="Hotuta T."/>
            <person name="Kusano J."/>
            <person name="Kanehori K."/>
            <person name="Takahashi-Fujii A."/>
            <person name="Hara H."/>
            <person name="Tanase T.-O."/>
            <person name="Nomura Y."/>
            <person name="Togiya S."/>
            <person name="Komai F."/>
            <person name="Hara R."/>
            <person name="Takeuchi K."/>
            <person name="Arita M."/>
            <person name="Imose N."/>
            <person name="Musashino K."/>
            <person name="Yuuki H."/>
            <person name="Oshima A."/>
            <person name="Sasaki N."/>
            <person name="Aotsuka S."/>
            <person name="Yoshikawa Y."/>
            <person name="Matsunawa H."/>
            <person name="Ichihara T."/>
            <person name="Shiohata N."/>
            <person name="Sano S."/>
            <person name="Moriya S."/>
            <person name="Momiyama H."/>
            <person name="Satoh N."/>
            <person name="Takami S."/>
            <person name="Terashima Y."/>
            <person name="Suzuki O."/>
            <person name="Nakagawa S."/>
            <person name="Senoh A."/>
            <person name="Mizoguchi H."/>
            <person name="Goto Y."/>
            <person name="Shimizu F."/>
            <person name="Wakebe H."/>
            <person name="Hishigaki H."/>
            <person name="Watanabe T."/>
            <person name="Sugiyama A."/>
            <person name="Takemoto M."/>
            <person name="Kawakami B."/>
            <person name="Yamazaki M."/>
            <person name="Watanabe K."/>
            <person name="Kumagai A."/>
            <person name="Itakura S."/>
            <person name="Fukuzumi Y."/>
            <person name="Fujimori Y."/>
            <person name="Komiyama M."/>
            <person name="Tashiro H."/>
            <person name="Tanigami A."/>
            <person name="Fujiwara T."/>
            <person name="Ono T."/>
            <person name="Yamada K."/>
            <person name="Fujii Y."/>
            <person name="Ozaki K."/>
            <person name="Hirao M."/>
            <person name="Ohmori Y."/>
            <person name="Kawabata A."/>
            <person name="Hikiji T."/>
            <person name="Kobatake N."/>
            <person name="Inagaki H."/>
            <person name="Ikema Y."/>
            <person name="Okamoto S."/>
            <person name="Okitani R."/>
            <person name="Kawakami T."/>
            <person name="Noguchi S."/>
            <person name="Itoh T."/>
            <person name="Shigeta K."/>
            <person name="Senba T."/>
            <person name="Matsumura K."/>
            <person name="Nakajima Y."/>
            <person name="Mizuno T."/>
            <person name="Morinaga M."/>
            <person name="Sasaki M."/>
            <person name="Togashi T."/>
            <person name="Oyama M."/>
            <person name="Hata H."/>
            <person name="Watanabe M."/>
            <person name="Komatsu T."/>
            <person name="Mizushima-Sugano J."/>
            <person name="Satoh T."/>
            <person name="Shirai Y."/>
            <person name="Takahashi Y."/>
            <person name="Nakagawa K."/>
            <person name="Okumura K."/>
            <person name="Nagase T."/>
            <person name="Nomura N."/>
            <person name="Kikuchi H."/>
            <person name="Masuho Y."/>
            <person name="Yamashita R."/>
            <person name="Nakai K."/>
            <person name="Yada T."/>
            <person name="Nakamura Y."/>
            <person name="Ohara O."/>
            <person name="Isogai T."/>
            <person name="Sugano S."/>
        </authorList>
    </citation>
    <scope>NUCLEOTIDE SEQUENCE [LARGE SCALE MRNA] (ISOFORMS 1 AND 5)</scope>
    <source>
        <tissue>Brain</tissue>
    </source>
</reference>
<reference key="3">
    <citation type="journal article" date="2004" name="Nature">
        <title>DNA sequence and analysis of human chromosome 9.</title>
        <authorList>
            <person name="Humphray S.J."/>
            <person name="Oliver K."/>
            <person name="Hunt A.R."/>
            <person name="Plumb R.W."/>
            <person name="Loveland J.E."/>
            <person name="Howe K.L."/>
            <person name="Andrews T.D."/>
            <person name="Searle S."/>
            <person name="Hunt S.E."/>
            <person name="Scott C.E."/>
            <person name="Jones M.C."/>
            <person name="Ainscough R."/>
            <person name="Almeida J.P."/>
            <person name="Ambrose K.D."/>
            <person name="Ashwell R.I.S."/>
            <person name="Babbage A.K."/>
            <person name="Babbage S."/>
            <person name="Bagguley C.L."/>
            <person name="Bailey J."/>
            <person name="Banerjee R."/>
            <person name="Barker D.J."/>
            <person name="Barlow K.F."/>
            <person name="Bates K."/>
            <person name="Beasley H."/>
            <person name="Beasley O."/>
            <person name="Bird C.P."/>
            <person name="Bray-Allen S."/>
            <person name="Brown A.J."/>
            <person name="Brown J.Y."/>
            <person name="Burford D."/>
            <person name="Burrill W."/>
            <person name="Burton J."/>
            <person name="Carder C."/>
            <person name="Carter N.P."/>
            <person name="Chapman J.C."/>
            <person name="Chen Y."/>
            <person name="Clarke G."/>
            <person name="Clark S.Y."/>
            <person name="Clee C.M."/>
            <person name="Clegg S."/>
            <person name="Collier R.E."/>
            <person name="Corby N."/>
            <person name="Crosier M."/>
            <person name="Cummings A.T."/>
            <person name="Davies J."/>
            <person name="Dhami P."/>
            <person name="Dunn M."/>
            <person name="Dutta I."/>
            <person name="Dyer L.W."/>
            <person name="Earthrowl M.E."/>
            <person name="Faulkner L."/>
            <person name="Fleming C.J."/>
            <person name="Frankish A."/>
            <person name="Frankland J.A."/>
            <person name="French L."/>
            <person name="Fricker D.G."/>
            <person name="Garner P."/>
            <person name="Garnett J."/>
            <person name="Ghori J."/>
            <person name="Gilbert J.G.R."/>
            <person name="Glison C."/>
            <person name="Grafham D.V."/>
            <person name="Gribble S."/>
            <person name="Griffiths C."/>
            <person name="Griffiths-Jones S."/>
            <person name="Grocock R."/>
            <person name="Guy J."/>
            <person name="Hall R.E."/>
            <person name="Hammond S."/>
            <person name="Harley J.L."/>
            <person name="Harrison E.S.I."/>
            <person name="Hart E.A."/>
            <person name="Heath P.D."/>
            <person name="Henderson C.D."/>
            <person name="Hopkins B.L."/>
            <person name="Howard P.J."/>
            <person name="Howden P.J."/>
            <person name="Huckle E."/>
            <person name="Johnson C."/>
            <person name="Johnson D."/>
            <person name="Joy A.A."/>
            <person name="Kay M."/>
            <person name="Keenan S."/>
            <person name="Kershaw J.K."/>
            <person name="Kimberley A.M."/>
            <person name="King A."/>
            <person name="Knights A."/>
            <person name="Laird G.K."/>
            <person name="Langford C."/>
            <person name="Lawlor S."/>
            <person name="Leongamornlert D.A."/>
            <person name="Leversha M."/>
            <person name="Lloyd C."/>
            <person name="Lloyd D.M."/>
            <person name="Lovell J."/>
            <person name="Martin S."/>
            <person name="Mashreghi-Mohammadi M."/>
            <person name="Matthews L."/>
            <person name="McLaren S."/>
            <person name="McLay K.E."/>
            <person name="McMurray A."/>
            <person name="Milne S."/>
            <person name="Nickerson T."/>
            <person name="Nisbett J."/>
            <person name="Nordsiek G."/>
            <person name="Pearce A.V."/>
            <person name="Peck A.I."/>
            <person name="Porter K.M."/>
            <person name="Pandian R."/>
            <person name="Pelan S."/>
            <person name="Phillimore B."/>
            <person name="Povey S."/>
            <person name="Ramsey Y."/>
            <person name="Rand V."/>
            <person name="Scharfe M."/>
            <person name="Sehra H.K."/>
            <person name="Shownkeen R."/>
            <person name="Sims S.K."/>
            <person name="Skuce C.D."/>
            <person name="Smith M."/>
            <person name="Steward C.A."/>
            <person name="Swarbreck D."/>
            <person name="Sycamore N."/>
            <person name="Tester J."/>
            <person name="Thorpe A."/>
            <person name="Tracey A."/>
            <person name="Tromans A."/>
            <person name="Thomas D.W."/>
            <person name="Wall M."/>
            <person name="Wallis J.M."/>
            <person name="West A.P."/>
            <person name="Whitehead S.L."/>
            <person name="Willey D.L."/>
            <person name="Williams S.A."/>
            <person name="Wilming L."/>
            <person name="Wray P.W."/>
            <person name="Young L."/>
            <person name="Ashurst J.L."/>
            <person name="Coulson A."/>
            <person name="Blocker H."/>
            <person name="Durbin R.M."/>
            <person name="Sulston J.E."/>
            <person name="Hubbard T."/>
            <person name="Jackson M.J."/>
            <person name="Bentley D.R."/>
            <person name="Beck S."/>
            <person name="Rogers J."/>
            <person name="Dunham I."/>
        </authorList>
    </citation>
    <scope>NUCLEOTIDE SEQUENCE [LARGE SCALE GENOMIC DNA]</scope>
</reference>
<reference key="4">
    <citation type="journal article" date="2004" name="Genome Res.">
        <title>The status, quality, and expansion of the NIH full-length cDNA project: the Mammalian Gene Collection (MGC).</title>
        <authorList>
            <consortium name="The MGC Project Team"/>
        </authorList>
    </citation>
    <scope>NUCLEOTIDE SEQUENCE [LARGE SCALE MRNA] (ISOFORM 3)</scope>
    <source>
        <tissue>Eye</tissue>
    </source>
</reference>
<reference key="5">
    <citation type="submission" date="2003-05" db="EMBL/GenBank/DDBJ databases">
        <title>Cloning of human full-length CDSs in BD Creator(TM) system donor vector.</title>
        <authorList>
            <person name="Kalnine N."/>
            <person name="Chen X."/>
            <person name="Rolfs A."/>
            <person name="Halleck A."/>
            <person name="Hines L."/>
            <person name="Eisenstein S."/>
            <person name="Koundinya M."/>
            <person name="Raphael J."/>
            <person name="Moreira D."/>
            <person name="Kelley T."/>
            <person name="LaBaer J."/>
            <person name="Lin Y."/>
            <person name="Phelan M."/>
            <person name="Farmer A."/>
        </authorList>
    </citation>
    <scope>NUCLEOTIDE SEQUENCE [LARGE SCALE MRNA] OF 29-485 (ISOFORM 3)</scope>
</reference>
<reference key="6">
    <citation type="journal article" date="1997" name="Genome Res.">
        <title>Large-scale concatenation cDNA sequencing.</title>
        <authorList>
            <person name="Yu W."/>
            <person name="Andersson B."/>
            <person name="Worley K.C."/>
            <person name="Muzny D.M."/>
            <person name="Ding Y."/>
            <person name="Liu W."/>
            <person name="Ricafrente J.Y."/>
            <person name="Wentland M.A."/>
            <person name="Lennon G."/>
            <person name="Gibbs R.A."/>
        </authorList>
    </citation>
    <scope>NUCLEOTIDE SEQUENCE [LARGE SCALE MRNA] OF 228-485 (ISOFORM 1)</scope>
    <source>
        <tissue>Brain</tissue>
    </source>
</reference>
<reference key="7">
    <citation type="journal article" date="2004" name="Mol. Vis.">
        <title>Bioinformatic approaches for identification and characterization of olfactomedin related genes with a potential role in pathogenesis of ocular disorders.</title>
        <authorList>
            <person name="Mukhopadhyay A."/>
            <person name="Talukdar S."/>
            <person name="Bhattacharjee A."/>
            <person name="Ray K."/>
        </authorList>
    </citation>
    <scope>IDENTIFICATION</scope>
</reference>
<reference key="8">
    <citation type="journal article" date="2005" name="J. Proteome Res.">
        <title>Human plasma N-glycoproteome analysis by immunoaffinity subtraction, hydrazide chemistry, and mass spectrometry.</title>
        <authorList>
            <person name="Liu T."/>
            <person name="Qian W.-J."/>
            <person name="Gritsenko M.A."/>
            <person name="Camp D.G. II"/>
            <person name="Monroe M.E."/>
            <person name="Moore R.J."/>
            <person name="Smith R.D."/>
        </authorList>
    </citation>
    <scope>GLYCOSYLATION [LARGE SCALE ANALYSIS] AT ASN-103; ASN-187; ASN-288 AND ASN-394</scope>
    <source>
        <tissue>Plasma</tissue>
    </source>
</reference>
<reference key="9">
    <citation type="journal article" date="2011" name="Invest. Ophthalmol. Vis. Sci.">
        <title>Olfactomedin 2: expression in the eye and interaction with other olfactomedin domain-containing proteins.</title>
        <authorList>
            <person name="Sultana A."/>
            <person name="Nakaya N."/>
            <person name="Senatorov V.V."/>
            <person name="Tomarev S.I."/>
        </authorList>
    </citation>
    <scope>INTERACTION WITH OLFM2</scope>
</reference>
<feature type="signal peptide" evidence="3">
    <location>
        <begin position="1"/>
        <end position="16"/>
    </location>
</feature>
<feature type="chain" id="PRO_0000020074" description="Noelin">
    <location>
        <begin position="17"/>
        <end position="485"/>
    </location>
</feature>
<feature type="domain" description="Olfactomedin-like" evidence="4">
    <location>
        <begin position="226"/>
        <end position="478"/>
    </location>
</feature>
<feature type="coiled-coil region" evidence="3">
    <location>
        <begin position="87"/>
        <end position="225"/>
    </location>
</feature>
<feature type="glycosylation site" description="N-linked (GlcNAc...) asparagine" evidence="3">
    <location>
        <position position="33"/>
    </location>
</feature>
<feature type="glycosylation site" description="N-linked (GlcNAc...) asparagine" evidence="5">
    <location>
        <position position="103"/>
    </location>
</feature>
<feature type="glycosylation site" description="N-linked (GlcNAc...) asparagine" evidence="5">
    <location>
        <position position="187"/>
    </location>
</feature>
<feature type="glycosylation site" description="N-linked (GlcNAc...) asparagine" evidence="5">
    <location>
        <position position="288"/>
    </location>
</feature>
<feature type="glycosylation site" description="N-linked (GlcNAc...) asparagine" evidence="3">
    <location>
        <position position="307"/>
    </location>
</feature>
<feature type="glycosylation site" description="N-linked (GlcNAc...) asparagine" evidence="5">
    <location>
        <position position="394"/>
    </location>
</feature>
<feature type="glycosylation site" description="N-linked (GlcNAc...) asparagine" evidence="3">
    <location>
        <position position="431"/>
    </location>
</feature>
<feature type="glycosylation site" description="N-linked (GlcNAc...) asparagine" evidence="3">
    <location>
        <position position="473"/>
    </location>
</feature>
<feature type="disulfide bond" description="Interchain" evidence="1">
    <location>
        <position position="221"/>
    </location>
</feature>
<feature type="disulfide bond" evidence="1 4">
    <location>
        <begin position="227"/>
        <end position="409"/>
    </location>
</feature>
<feature type="splice variant" id="VSP_003759" description="In isoform 3 and isoform 4." evidence="8 9 10">
    <original>MSVPLLKIGVVLSTMAMITNWMSQTLPSLVGLNTTKLSAAGGGTLDRSTG</original>
    <variation>MPGRWRWQRDMHPARKLLSLLFLILMGTELTQ</variation>
    <location>
        <begin position="1"/>
        <end position="50"/>
    </location>
</feature>
<feature type="splice variant" id="VSP_055625" description="In isoform 5." evidence="7">
    <original>MSVPLLKIGVVLSTMAMITNWMSQTLPSLVGLNTTKLSAAGGGTLDRSTG</original>
    <variation>MGEAPGREGRGPCPQLESPRRRR</variation>
    <location>
        <begin position="1"/>
        <end position="50"/>
    </location>
</feature>
<feature type="splice variant" id="VSP_003760" description="In isoform 2 and isoform 4." evidence="9">
    <original>A</original>
    <variation>G</variation>
    <location>
        <position position="153"/>
    </location>
</feature>
<feature type="splice variant" id="VSP_003761" description="In isoform 2 and isoform 4." evidence="9">
    <location>
        <begin position="154"/>
        <end position="485"/>
    </location>
</feature>
<feature type="sequence conflict" description="In Ref. 2; BAC04756." evidence="11" ref="2">
    <original>N</original>
    <variation>T</variation>
    <location>
        <position position="127"/>
    </location>
</feature>
<feature type="strand" evidence="12">
    <location>
        <begin position="230"/>
        <end position="233"/>
    </location>
</feature>
<feature type="strand" evidence="12">
    <location>
        <begin position="237"/>
        <end position="241"/>
    </location>
</feature>
<feature type="strand" evidence="12">
    <location>
        <begin position="245"/>
        <end position="250"/>
    </location>
</feature>
<feature type="strand" evidence="12">
    <location>
        <begin position="262"/>
        <end position="266"/>
    </location>
</feature>
<feature type="strand" evidence="12">
    <location>
        <begin position="268"/>
        <end position="270"/>
    </location>
</feature>
<feature type="strand" evidence="12">
    <location>
        <begin position="273"/>
        <end position="279"/>
    </location>
</feature>
<feature type="helix" evidence="12">
    <location>
        <begin position="280"/>
        <end position="285"/>
    </location>
</feature>
<feature type="strand" evidence="12">
    <location>
        <begin position="290"/>
        <end position="293"/>
    </location>
</feature>
<feature type="strand" evidence="12">
    <location>
        <begin position="304"/>
        <end position="306"/>
    </location>
</feature>
<feature type="strand" evidence="12">
    <location>
        <begin position="309"/>
        <end position="314"/>
    </location>
</feature>
<feature type="strand" evidence="12">
    <location>
        <begin position="317"/>
        <end position="324"/>
    </location>
</feature>
<feature type="turn" evidence="12">
    <location>
        <begin position="325"/>
        <end position="328"/>
    </location>
</feature>
<feature type="strand" evidence="12">
    <location>
        <begin position="329"/>
        <end position="335"/>
    </location>
</feature>
<feature type="strand" evidence="12">
    <location>
        <begin position="342"/>
        <end position="345"/>
    </location>
</feature>
<feature type="strand" evidence="12">
    <location>
        <begin position="356"/>
        <end position="360"/>
    </location>
</feature>
<feature type="strand" evidence="12">
    <location>
        <begin position="363"/>
        <end position="370"/>
    </location>
</feature>
<feature type="turn" evidence="12">
    <location>
        <begin position="371"/>
        <end position="375"/>
    </location>
</feature>
<feature type="strand" evidence="12">
    <location>
        <begin position="376"/>
        <end position="382"/>
    </location>
</feature>
<feature type="turn" evidence="12">
    <location>
        <begin position="384"/>
        <end position="386"/>
    </location>
</feature>
<feature type="strand" evidence="12">
    <location>
        <begin position="389"/>
        <end position="398"/>
    </location>
</feature>
<feature type="helix" evidence="12">
    <location>
        <begin position="399"/>
        <end position="401"/>
    </location>
</feature>
<feature type="strand" evidence="12">
    <location>
        <begin position="405"/>
        <end position="408"/>
    </location>
</feature>
<feature type="strand" evidence="12">
    <location>
        <begin position="411"/>
        <end position="416"/>
    </location>
</feature>
<feature type="strand" evidence="12">
    <location>
        <begin position="418"/>
        <end position="421"/>
    </location>
</feature>
<feature type="strand" evidence="12">
    <location>
        <begin position="423"/>
        <end position="429"/>
    </location>
</feature>
<feature type="turn" evidence="12">
    <location>
        <begin position="430"/>
        <end position="433"/>
    </location>
</feature>
<feature type="strand" evidence="12">
    <location>
        <begin position="434"/>
        <end position="441"/>
    </location>
</feature>
<feature type="strand" evidence="12">
    <location>
        <begin position="445"/>
        <end position="455"/>
    </location>
</feature>
<feature type="turn" evidence="12">
    <location>
        <begin position="456"/>
        <end position="459"/>
    </location>
</feature>
<feature type="strand" evidence="12">
    <location>
        <begin position="460"/>
        <end position="476"/>
    </location>
</feature>
<gene>
    <name type="primary">OLFM1</name>
    <name type="synonym">NOE1</name>
    <name type="synonym">NOEL1</name>
</gene>
<organism>
    <name type="scientific">Homo sapiens</name>
    <name type="common">Human</name>
    <dbReference type="NCBI Taxonomy" id="9606"/>
    <lineage>
        <taxon>Eukaryota</taxon>
        <taxon>Metazoa</taxon>
        <taxon>Chordata</taxon>
        <taxon>Craniata</taxon>
        <taxon>Vertebrata</taxon>
        <taxon>Euteleostomi</taxon>
        <taxon>Mammalia</taxon>
        <taxon>Eutheria</taxon>
        <taxon>Euarchontoglires</taxon>
        <taxon>Primates</taxon>
        <taxon>Haplorrhini</taxon>
        <taxon>Catarrhini</taxon>
        <taxon>Hominidae</taxon>
        <taxon>Homo</taxon>
    </lineage>
</organism>
<proteinExistence type="evidence at protein level"/>